<dbReference type="EC" id="3.1.1.96" evidence="1"/>
<dbReference type="EMBL" id="CP000627">
    <property type="protein sequence ID" value="ABQ19509.1"/>
    <property type="molecule type" value="Genomic_DNA"/>
</dbReference>
<dbReference type="EMBL" id="CP001235">
    <property type="protein sequence ID" value="ACP10837.1"/>
    <property type="molecule type" value="Genomic_DNA"/>
</dbReference>
<dbReference type="RefSeq" id="WP_000560961.1">
    <property type="nucleotide sequence ID" value="NZ_JAACZH010000007.1"/>
</dbReference>
<dbReference type="SMR" id="A5F4Q7"/>
<dbReference type="GeneID" id="89513272"/>
<dbReference type="KEGG" id="vco:VC0395_A2313"/>
<dbReference type="KEGG" id="vcr:VC395_2853"/>
<dbReference type="PATRIC" id="fig|345073.21.peg.2751"/>
<dbReference type="eggNOG" id="COG1490">
    <property type="taxonomic scope" value="Bacteria"/>
</dbReference>
<dbReference type="HOGENOM" id="CLU_076901_1_1_6"/>
<dbReference type="OrthoDB" id="9801395at2"/>
<dbReference type="Proteomes" id="UP000000249">
    <property type="component" value="Chromosome 2"/>
</dbReference>
<dbReference type="GO" id="GO:0005737">
    <property type="term" value="C:cytoplasm"/>
    <property type="evidence" value="ECO:0007669"/>
    <property type="project" value="UniProtKB-SubCell"/>
</dbReference>
<dbReference type="GO" id="GO:0051500">
    <property type="term" value="F:D-tyrosyl-tRNA(Tyr) deacylase activity"/>
    <property type="evidence" value="ECO:0007669"/>
    <property type="project" value="TreeGrafter"/>
</dbReference>
<dbReference type="GO" id="GO:0106026">
    <property type="term" value="F:Gly-tRNA(Ala) deacylase activity"/>
    <property type="evidence" value="ECO:0007669"/>
    <property type="project" value="UniProtKB-UniRule"/>
</dbReference>
<dbReference type="GO" id="GO:0043908">
    <property type="term" value="F:Ser(Gly)-tRNA(Ala) hydrolase activity"/>
    <property type="evidence" value="ECO:0007669"/>
    <property type="project" value="UniProtKB-UniRule"/>
</dbReference>
<dbReference type="GO" id="GO:0000049">
    <property type="term" value="F:tRNA binding"/>
    <property type="evidence" value="ECO:0007669"/>
    <property type="project" value="UniProtKB-UniRule"/>
</dbReference>
<dbReference type="GO" id="GO:0019478">
    <property type="term" value="P:D-amino acid catabolic process"/>
    <property type="evidence" value="ECO:0007669"/>
    <property type="project" value="UniProtKB-UniRule"/>
</dbReference>
<dbReference type="CDD" id="cd00563">
    <property type="entry name" value="Dtyr_deacylase"/>
    <property type="match status" value="1"/>
</dbReference>
<dbReference type="FunFam" id="3.50.80.10:FF:000001">
    <property type="entry name" value="D-aminoacyl-tRNA deacylase"/>
    <property type="match status" value="1"/>
</dbReference>
<dbReference type="Gene3D" id="3.50.80.10">
    <property type="entry name" value="D-tyrosyl-tRNA(Tyr) deacylase"/>
    <property type="match status" value="1"/>
</dbReference>
<dbReference type="HAMAP" id="MF_00518">
    <property type="entry name" value="Deacylase_Dtd"/>
    <property type="match status" value="1"/>
</dbReference>
<dbReference type="InterPro" id="IPR003732">
    <property type="entry name" value="Daa-tRNA_deacyls_DTD"/>
</dbReference>
<dbReference type="InterPro" id="IPR023509">
    <property type="entry name" value="DTD-like_sf"/>
</dbReference>
<dbReference type="NCBIfam" id="TIGR00256">
    <property type="entry name" value="D-aminoacyl-tRNA deacylase"/>
    <property type="match status" value="1"/>
</dbReference>
<dbReference type="PANTHER" id="PTHR10472:SF5">
    <property type="entry name" value="D-AMINOACYL-TRNA DEACYLASE 1"/>
    <property type="match status" value="1"/>
</dbReference>
<dbReference type="PANTHER" id="PTHR10472">
    <property type="entry name" value="D-TYROSYL-TRNA TYR DEACYLASE"/>
    <property type="match status" value="1"/>
</dbReference>
<dbReference type="Pfam" id="PF02580">
    <property type="entry name" value="Tyr_Deacylase"/>
    <property type="match status" value="1"/>
</dbReference>
<dbReference type="SUPFAM" id="SSF69500">
    <property type="entry name" value="DTD-like"/>
    <property type="match status" value="1"/>
</dbReference>
<feature type="chain" id="PRO_1000072488" description="D-aminoacyl-tRNA deacylase">
    <location>
        <begin position="1"/>
        <end position="144"/>
    </location>
</feature>
<feature type="short sequence motif" description="Gly-cisPro motif, important for rejection of L-amino acids" evidence="1">
    <location>
        <begin position="136"/>
        <end position="137"/>
    </location>
</feature>
<organism>
    <name type="scientific">Vibrio cholerae serotype O1 (strain ATCC 39541 / Classical Ogawa 395 / O395)</name>
    <dbReference type="NCBI Taxonomy" id="345073"/>
    <lineage>
        <taxon>Bacteria</taxon>
        <taxon>Pseudomonadati</taxon>
        <taxon>Pseudomonadota</taxon>
        <taxon>Gammaproteobacteria</taxon>
        <taxon>Vibrionales</taxon>
        <taxon>Vibrionaceae</taxon>
        <taxon>Vibrio</taxon>
    </lineage>
</organism>
<evidence type="ECO:0000255" key="1">
    <source>
        <dbReference type="HAMAP-Rule" id="MF_00518"/>
    </source>
</evidence>
<keyword id="KW-0963">Cytoplasm</keyword>
<keyword id="KW-0378">Hydrolase</keyword>
<keyword id="KW-0694">RNA-binding</keyword>
<keyword id="KW-0820">tRNA-binding</keyword>
<comment type="function">
    <text evidence="1">An aminoacyl-tRNA editing enzyme that deacylates mischarged D-aminoacyl-tRNAs. Also deacylates mischarged glycyl-tRNA(Ala), protecting cells against glycine mischarging by AlaRS. Acts via tRNA-based rather than protein-based catalysis; rejects L-amino acids rather than detecting D-amino acids in the active site. By recycling D-aminoacyl-tRNA to D-amino acids and free tRNA molecules, this enzyme counteracts the toxicity associated with the formation of D-aminoacyl-tRNA entities in vivo and helps enforce protein L-homochirality.</text>
</comment>
<comment type="catalytic activity">
    <reaction evidence="1">
        <text>glycyl-tRNA(Ala) + H2O = tRNA(Ala) + glycine + H(+)</text>
        <dbReference type="Rhea" id="RHEA:53744"/>
        <dbReference type="Rhea" id="RHEA-COMP:9657"/>
        <dbReference type="Rhea" id="RHEA-COMP:13640"/>
        <dbReference type="ChEBI" id="CHEBI:15377"/>
        <dbReference type="ChEBI" id="CHEBI:15378"/>
        <dbReference type="ChEBI" id="CHEBI:57305"/>
        <dbReference type="ChEBI" id="CHEBI:78442"/>
        <dbReference type="ChEBI" id="CHEBI:78522"/>
        <dbReference type="EC" id="3.1.1.96"/>
    </reaction>
</comment>
<comment type="catalytic activity">
    <reaction evidence="1">
        <text>a D-aminoacyl-tRNA + H2O = a tRNA + a D-alpha-amino acid + H(+)</text>
        <dbReference type="Rhea" id="RHEA:13953"/>
        <dbReference type="Rhea" id="RHEA-COMP:10123"/>
        <dbReference type="Rhea" id="RHEA-COMP:10124"/>
        <dbReference type="ChEBI" id="CHEBI:15377"/>
        <dbReference type="ChEBI" id="CHEBI:15378"/>
        <dbReference type="ChEBI" id="CHEBI:59871"/>
        <dbReference type="ChEBI" id="CHEBI:78442"/>
        <dbReference type="ChEBI" id="CHEBI:79333"/>
        <dbReference type="EC" id="3.1.1.96"/>
    </reaction>
</comment>
<comment type="subunit">
    <text evidence="1">Homodimer.</text>
</comment>
<comment type="subcellular location">
    <subcellularLocation>
        <location evidence="1">Cytoplasm</location>
    </subcellularLocation>
</comment>
<comment type="domain">
    <text evidence="1">A Gly-cisPro motif from one monomer fits into the active site of the other monomer to allow specific chiral rejection of L-amino acids.</text>
</comment>
<comment type="similarity">
    <text evidence="1">Belongs to the DTD family.</text>
</comment>
<gene>
    <name evidence="1" type="primary">dtd</name>
    <name type="ordered locus">VC0395_A2313</name>
    <name type="ordered locus">VC395_2853</name>
</gene>
<reference key="1">
    <citation type="submission" date="2007-03" db="EMBL/GenBank/DDBJ databases">
        <authorList>
            <person name="Heidelberg J."/>
        </authorList>
    </citation>
    <scope>NUCLEOTIDE SEQUENCE [LARGE SCALE GENOMIC DNA]</scope>
    <source>
        <strain>ATCC 39541 / Classical Ogawa 395 / O395</strain>
    </source>
</reference>
<reference key="2">
    <citation type="journal article" date="2008" name="PLoS ONE">
        <title>A recalibrated molecular clock and independent origins for the cholera pandemic clones.</title>
        <authorList>
            <person name="Feng L."/>
            <person name="Reeves P.R."/>
            <person name="Lan R."/>
            <person name="Ren Y."/>
            <person name="Gao C."/>
            <person name="Zhou Z."/>
            <person name="Ren Y."/>
            <person name="Cheng J."/>
            <person name="Wang W."/>
            <person name="Wang J."/>
            <person name="Qian W."/>
            <person name="Li D."/>
            <person name="Wang L."/>
        </authorList>
    </citation>
    <scope>NUCLEOTIDE SEQUENCE [LARGE SCALE GENOMIC DNA]</scope>
    <source>
        <strain>ATCC 39541 / Classical Ogawa 395 / O395</strain>
    </source>
</reference>
<name>DTD_VIBC3</name>
<sequence length="144" mass="15737">MIALIQRVSEAAVRVDGEVVGAIDKGLLVLLGVEREDDEAKAKRLVERVTSYRVFEDSEGKMNLSVKDVGGSVLVVSQFTLPADTKKGTRAGFSRGAAPQEAERLYDYFSDLCAQILPTERGRFAADMKVSLINDGPVTFWLQA</sequence>
<accession>A5F4Q7</accession>
<accession>C3LYB6</accession>
<protein>
    <recommendedName>
        <fullName evidence="1">D-aminoacyl-tRNA deacylase</fullName>
        <shortName evidence="1">DTD</shortName>
        <ecNumber evidence="1">3.1.1.96</ecNumber>
    </recommendedName>
    <alternativeName>
        <fullName evidence="1">Gly-tRNA(Ala) deacylase</fullName>
    </alternativeName>
</protein>
<proteinExistence type="inferred from homology"/>